<gene>
    <name evidence="1 3" type="primary">khpA</name>
    <name type="ordered locus">lp_1637</name>
</gene>
<sequence>MADIKALITTVVTPLVQYPDDIKVDFKETTRYLEYNLTVNPEDIGRVIGRQGRVASAIRTIVYSVRVSGPKRVRLTIEDGQQKNS</sequence>
<protein>
    <recommendedName>
        <fullName evidence="1 3">RNA-binding protein KhpA</fullName>
    </recommendedName>
    <alternativeName>
        <fullName evidence="1">KH-domain protein A</fullName>
    </alternativeName>
</protein>
<organism>
    <name type="scientific">Lactiplantibacillus plantarum (strain ATCC BAA-793 / NCIMB 8826 / WCFS1)</name>
    <name type="common">Lactobacillus plantarum</name>
    <dbReference type="NCBI Taxonomy" id="220668"/>
    <lineage>
        <taxon>Bacteria</taxon>
        <taxon>Bacillati</taxon>
        <taxon>Bacillota</taxon>
        <taxon>Bacilli</taxon>
        <taxon>Lactobacillales</taxon>
        <taxon>Lactobacillaceae</taxon>
        <taxon>Lactiplantibacillus</taxon>
    </lineage>
</organism>
<accession>F9UP09</accession>
<feature type="chain" id="PRO_0000454537" description="RNA-binding protein KhpA">
    <location>
        <begin position="1"/>
        <end position="85"/>
    </location>
</feature>
<feature type="domain" description="KH" evidence="1">
    <location>
        <begin position="32"/>
        <end position="85"/>
    </location>
</feature>
<name>KHPA_LACPL</name>
<evidence type="ECO:0000255" key="1">
    <source>
        <dbReference type="HAMAP-Rule" id="MF_00088"/>
    </source>
</evidence>
<evidence type="ECO:0000269" key="2">
    <source>
    </source>
</evidence>
<evidence type="ECO:0000303" key="3">
    <source>
    </source>
</evidence>
<evidence type="ECO:0000305" key="4">
    <source>
    </source>
</evidence>
<dbReference type="EMBL" id="AL935263">
    <property type="protein sequence ID" value="CCC78948.1"/>
    <property type="molecule type" value="Genomic_DNA"/>
</dbReference>
<dbReference type="RefSeq" id="WP_003640382.1">
    <property type="nucleotide sequence ID" value="NC_004567.2"/>
</dbReference>
<dbReference type="RefSeq" id="YP_004889462.1">
    <property type="nucleotide sequence ID" value="NC_004567.2"/>
</dbReference>
<dbReference type="SMR" id="F9UP09"/>
<dbReference type="STRING" id="220668.lp_1637"/>
<dbReference type="EnsemblBacteria" id="CCC78948">
    <property type="protein sequence ID" value="CCC78948"/>
    <property type="gene ID" value="lp_1637"/>
</dbReference>
<dbReference type="KEGG" id="lpl:lp_1637"/>
<dbReference type="PATRIC" id="fig|220668.9.peg.1384"/>
<dbReference type="eggNOG" id="COG1837">
    <property type="taxonomic scope" value="Bacteria"/>
</dbReference>
<dbReference type="HOGENOM" id="CLU_132074_1_2_9"/>
<dbReference type="OrthoDB" id="9812389at2"/>
<dbReference type="PhylomeDB" id="F9UP09"/>
<dbReference type="Proteomes" id="UP000000432">
    <property type="component" value="Chromosome"/>
</dbReference>
<dbReference type="GO" id="GO:0005737">
    <property type="term" value="C:cytoplasm"/>
    <property type="evidence" value="ECO:0007669"/>
    <property type="project" value="UniProtKB-SubCell"/>
</dbReference>
<dbReference type="GO" id="GO:0003723">
    <property type="term" value="F:RNA binding"/>
    <property type="evidence" value="ECO:0007669"/>
    <property type="project" value="UniProtKB-UniRule"/>
</dbReference>
<dbReference type="GO" id="GO:0071555">
    <property type="term" value="P:cell wall organization"/>
    <property type="evidence" value="ECO:0007669"/>
    <property type="project" value="UniProtKB-KW"/>
</dbReference>
<dbReference type="GO" id="GO:0009252">
    <property type="term" value="P:peptidoglycan biosynthetic process"/>
    <property type="evidence" value="ECO:0007669"/>
    <property type="project" value="UniProtKB-UniRule"/>
</dbReference>
<dbReference type="GO" id="GO:0008360">
    <property type="term" value="P:regulation of cell shape"/>
    <property type="evidence" value="ECO:0007669"/>
    <property type="project" value="UniProtKB-KW"/>
</dbReference>
<dbReference type="CDD" id="cd22533">
    <property type="entry name" value="KH-II_YlqC-like"/>
    <property type="match status" value="1"/>
</dbReference>
<dbReference type="Gene3D" id="3.30.300.20">
    <property type="match status" value="1"/>
</dbReference>
<dbReference type="HAMAP" id="MF_00088">
    <property type="entry name" value="KhpA"/>
    <property type="match status" value="1"/>
</dbReference>
<dbReference type="InterPro" id="IPR015946">
    <property type="entry name" value="KH_dom-like_a/b"/>
</dbReference>
<dbReference type="InterPro" id="IPR020627">
    <property type="entry name" value="KhpA"/>
</dbReference>
<dbReference type="PANTHER" id="PTHR34654:SF1">
    <property type="entry name" value="RNA-BINDING PROTEIN KHPA"/>
    <property type="match status" value="1"/>
</dbReference>
<dbReference type="PANTHER" id="PTHR34654">
    <property type="entry name" value="UPF0109 PROTEIN SCO5592"/>
    <property type="match status" value="1"/>
</dbReference>
<dbReference type="Pfam" id="PF13083">
    <property type="entry name" value="KH_KhpA-B"/>
    <property type="match status" value="1"/>
</dbReference>
<keyword id="KW-0133">Cell shape</keyword>
<keyword id="KW-0961">Cell wall biogenesis/degradation</keyword>
<keyword id="KW-0963">Cytoplasm</keyword>
<keyword id="KW-1185">Reference proteome</keyword>
<keyword id="KW-0694">RNA-binding</keyword>
<proteinExistence type="inferred from homology"/>
<comment type="function">
    <text evidence="1 2">A probable RNA chaperone. Forms a complex with KhpB which binds to cellular RNA and controls its expression. Plays a role in peptidoglycan (PG) homeostasis and cell length regulation.</text>
</comment>
<comment type="function">
    <text evidence="2">Necessary for correct cell elongation.</text>
</comment>
<comment type="subunit">
    <text evidence="1 4">Forms a complex with KhpB.</text>
</comment>
<comment type="subcellular location">
    <subcellularLocation>
        <location evidence="1">Cytoplasm</location>
    </subcellularLocation>
</comment>
<comment type="disruption phenotype">
    <text evidence="2">Cell length is reduced.</text>
</comment>
<comment type="similarity">
    <text evidence="1">Belongs to the KhpA RNA-binding protein family.</text>
</comment>
<reference key="1">
    <citation type="journal article" date="2003" name="Proc. Natl. Acad. Sci. U.S.A.">
        <title>Complete genome sequence of Lactobacillus plantarum WCFS1.</title>
        <authorList>
            <person name="Kleerebezem M."/>
            <person name="Boekhorst J."/>
            <person name="van Kranenburg R."/>
            <person name="Molenaar D."/>
            <person name="Kuipers O.P."/>
            <person name="Leer R."/>
            <person name="Tarchini R."/>
            <person name="Peters S.A."/>
            <person name="Sandbrink H.M."/>
            <person name="Fiers M.W.E.J."/>
            <person name="Stiekema W."/>
            <person name="Klein Lankhorst R.M."/>
            <person name="Bron P.A."/>
            <person name="Hoffer S.M."/>
            <person name="Nierop Groot M.N."/>
            <person name="Kerkhoven R."/>
            <person name="De Vries M."/>
            <person name="Ursing B."/>
            <person name="De Vos W.M."/>
            <person name="Siezen R.J."/>
        </authorList>
    </citation>
    <scope>NUCLEOTIDE SEQUENCE [LARGE SCALE GENOMIC DNA]</scope>
    <source>
        <strain>ATCC BAA-793 / NCIMB 8826 / WCFS1</strain>
    </source>
</reference>
<reference key="2">
    <citation type="journal article" date="2012" name="J. Bacteriol.">
        <title>Complete resequencing and reannotation of the Lactobacillus plantarum WCFS1 genome.</title>
        <authorList>
            <person name="Siezen R.J."/>
            <person name="Francke C."/>
            <person name="Renckens B."/>
            <person name="Boekhorst J."/>
            <person name="Wels M."/>
            <person name="Kleerebezem M."/>
            <person name="van Hijum S.A."/>
        </authorList>
    </citation>
    <scope>NUCLEOTIDE SEQUENCE [LARGE SCALE GENOMIC DNA]</scope>
    <scope>GENOME REANNOTATION</scope>
    <source>
        <strain>ATCC BAA-793 / NCIMB 8826 / WCFS1</strain>
    </source>
</reference>
<reference key="3">
    <citation type="journal article" date="2019" name="MSphere">
        <title>CRISPR Interference for Rapid Knockdown of Essential Cell Cycle Genes in Lactobacillus plantarum.</title>
        <authorList>
            <person name="Myrbraaten I.S."/>
            <person name="Wiull K."/>
            <person name="Salehian Z."/>
            <person name="Haavarstein L.S."/>
            <person name="Straume D."/>
            <person name="Mathiesen G."/>
            <person name="Kjos M."/>
        </authorList>
    </citation>
    <scope>FUNCTION</scope>
    <scope>DISRUPTION PHENOTYPE</scope>
    <source>
        <strain>ATCC BAA-793 / NCIMB 8826 / WCFS1</strain>
    </source>
</reference>